<protein>
    <recommendedName>
        <fullName evidence="1">UPF0154 protein SEQ_1869</fullName>
    </recommendedName>
</protein>
<accession>C0M7Z7</accession>
<proteinExistence type="inferred from homology"/>
<dbReference type="EMBL" id="FM204883">
    <property type="protein sequence ID" value="CAW95043.1"/>
    <property type="molecule type" value="Genomic_DNA"/>
</dbReference>
<dbReference type="RefSeq" id="WP_012516235.1">
    <property type="nucleotide sequence ID" value="NC_012471.1"/>
</dbReference>
<dbReference type="SMR" id="C0M7Z7"/>
<dbReference type="KEGG" id="seu:SEQ_1869"/>
<dbReference type="HOGENOM" id="CLU_180108_0_0_9"/>
<dbReference type="OrthoDB" id="1769076at2"/>
<dbReference type="Proteomes" id="UP000001365">
    <property type="component" value="Chromosome"/>
</dbReference>
<dbReference type="GO" id="GO:0005886">
    <property type="term" value="C:plasma membrane"/>
    <property type="evidence" value="ECO:0007669"/>
    <property type="project" value="UniProtKB-SubCell"/>
</dbReference>
<dbReference type="HAMAP" id="MF_00363">
    <property type="entry name" value="UPF0154"/>
    <property type="match status" value="1"/>
</dbReference>
<dbReference type="InterPro" id="IPR005359">
    <property type="entry name" value="UPF0154"/>
</dbReference>
<dbReference type="Pfam" id="PF03672">
    <property type="entry name" value="UPF0154"/>
    <property type="match status" value="1"/>
</dbReference>
<organism>
    <name type="scientific">Streptococcus equi subsp. equi (strain 4047)</name>
    <dbReference type="NCBI Taxonomy" id="553482"/>
    <lineage>
        <taxon>Bacteria</taxon>
        <taxon>Bacillati</taxon>
        <taxon>Bacillota</taxon>
        <taxon>Bacilli</taxon>
        <taxon>Lactobacillales</taxon>
        <taxon>Streptococcaceae</taxon>
        <taxon>Streptococcus</taxon>
    </lineage>
</organism>
<gene>
    <name type="ordered locus">SEQ_1869</name>
</gene>
<keyword id="KW-1003">Cell membrane</keyword>
<keyword id="KW-0472">Membrane</keyword>
<keyword id="KW-0812">Transmembrane</keyword>
<keyword id="KW-1133">Transmembrane helix</keyword>
<evidence type="ECO:0000255" key="1">
    <source>
        <dbReference type="HAMAP-Rule" id="MF_00363"/>
    </source>
</evidence>
<comment type="subcellular location">
    <subcellularLocation>
        <location evidence="1">Cell membrane</location>
        <topology evidence="1">Single-pass membrane protein</topology>
    </subcellularLocation>
</comment>
<comment type="similarity">
    <text evidence="1">Belongs to the UPF0154 family.</text>
</comment>
<name>Y1869_STRE4</name>
<reference key="1">
    <citation type="journal article" date="2009" name="PLoS Pathog.">
        <title>Genomic evidence for the evolution of Streptococcus equi: host restriction, increased virulence, and genetic exchange with human pathogens.</title>
        <authorList>
            <person name="Holden M.T.G."/>
            <person name="Heather Z."/>
            <person name="Paillot R."/>
            <person name="Steward K.F."/>
            <person name="Webb K."/>
            <person name="Ainslie F."/>
            <person name="Jourdan T."/>
            <person name="Bason N.C."/>
            <person name="Holroyd N.E."/>
            <person name="Mungall K."/>
            <person name="Quail M.A."/>
            <person name="Sanders M."/>
            <person name="Simmonds M."/>
            <person name="Willey D."/>
            <person name="Brooks K."/>
            <person name="Aanensen D.M."/>
            <person name="Spratt B.G."/>
            <person name="Jolley K.A."/>
            <person name="Maiden M.C.J."/>
            <person name="Kehoe M."/>
            <person name="Chanter N."/>
            <person name="Bentley S.D."/>
            <person name="Robinson C."/>
            <person name="Maskell D.J."/>
            <person name="Parkhill J."/>
            <person name="Waller A.S."/>
        </authorList>
    </citation>
    <scope>NUCLEOTIDE SEQUENCE [LARGE SCALE GENOMIC DNA]</scope>
    <source>
        <strain>4047</strain>
    </source>
</reference>
<sequence length="80" mass="8956">MSTAIWILLIIVALTAGLFGGIFIARKQIEKEIGEHPRLTPEAIREMMSQMGQKPSEAKIQQTYRNIVKQSKAAMTKGKK</sequence>
<feature type="chain" id="PRO_1000197729" description="UPF0154 protein SEQ_1869">
    <location>
        <begin position="1"/>
        <end position="80"/>
    </location>
</feature>
<feature type="transmembrane region" description="Helical" evidence="1">
    <location>
        <begin position="4"/>
        <end position="24"/>
    </location>
</feature>